<accession>A5DKC0</accession>
<proteinExistence type="inferred from homology"/>
<name>NAR1_PICGU</name>
<protein>
    <recommendedName>
        <fullName>Cytosolic Fe-S cluster assembly factor NAR1</fullName>
    </recommendedName>
    <alternativeName>
        <fullName>Nuclear architecture-related protein 1</fullName>
    </alternativeName>
</protein>
<reference key="1">
    <citation type="journal article" date="2009" name="Nature">
        <title>Evolution of pathogenicity and sexual reproduction in eight Candida genomes.</title>
        <authorList>
            <person name="Butler G."/>
            <person name="Rasmussen M.D."/>
            <person name="Lin M.F."/>
            <person name="Santos M.A.S."/>
            <person name="Sakthikumar S."/>
            <person name="Munro C.A."/>
            <person name="Rheinbay E."/>
            <person name="Grabherr M."/>
            <person name="Forche A."/>
            <person name="Reedy J.L."/>
            <person name="Agrafioti I."/>
            <person name="Arnaud M.B."/>
            <person name="Bates S."/>
            <person name="Brown A.J.P."/>
            <person name="Brunke S."/>
            <person name="Costanzo M.C."/>
            <person name="Fitzpatrick D.A."/>
            <person name="de Groot P.W.J."/>
            <person name="Harris D."/>
            <person name="Hoyer L.L."/>
            <person name="Hube B."/>
            <person name="Klis F.M."/>
            <person name="Kodira C."/>
            <person name="Lennard N."/>
            <person name="Logue M.E."/>
            <person name="Martin R."/>
            <person name="Neiman A.M."/>
            <person name="Nikolaou E."/>
            <person name="Quail M.A."/>
            <person name="Quinn J."/>
            <person name="Santos M.C."/>
            <person name="Schmitzberger F.F."/>
            <person name="Sherlock G."/>
            <person name="Shah P."/>
            <person name="Silverstein K.A.T."/>
            <person name="Skrzypek M.S."/>
            <person name="Soll D."/>
            <person name="Staggs R."/>
            <person name="Stansfield I."/>
            <person name="Stumpf M.P.H."/>
            <person name="Sudbery P.E."/>
            <person name="Srikantha T."/>
            <person name="Zeng Q."/>
            <person name="Berman J."/>
            <person name="Berriman M."/>
            <person name="Heitman J."/>
            <person name="Gow N.A.R."/>
            <person name="Lorenz M.C."/>
            <person name="Birren B.W."/>
            <person name="Kellis M."/>
            <person name="Cuomo C.A."/>
        </authorList>
    </citation>
    <scope>NUCLEOTIDE SEQUENCE [LARGE SCALE GENOMIC DNA]</scope>
    <source>
        <strain>ATCC 6260 / CBS 566 / DSM 6381 / JCM 1539 / NBRC 10279 / NRRL Y-324</strain>
    </source>
</reference>
<keyword id="KW-0004">4Fe-4S</keyword>
<keyword id="KW-0408">Iron</keyword>
<keyword id="KW-0411">Iron-sulfur</keyword>
<keyword id="KW-0479">Metal-binding</keyword>
<keyword id="KW-1185">Reference proteome</keyword>
<evidence type="ECO:0000250" key="1"/>
<evidence type="ECO:0000255" key="2"/>
<evidence type="ECO:0000256" key="3">
    <source>
        <dbReference type="SAM" id="MobiDB-lite"/>
    </source>
</evidence>
<evidence type="ECO:0000305" key="4"/>
<comment type="function">
    <text evidence="1">Component of the cytosolic Fe/S protein assembly machinery. Required for maturation of extramitochondrial Fe/S proteins. May play a role in the transfer of pre-assembled Fe/S clusters to target apoproteins (By similarity).</text>
</comment>
<comment type="similarity">
    <text evidence="4">Belongs to the NARF family.</text>
</comment>
<organism>
    <name type="scientific">Meyerozyma guilliermondii (strain ATCC 6260 / CBS 566 / DSM 6381 / JCM 1539 / NBRC 10279 / NRRL Y-324)</name>
    <name type="common">Yeast</name>
    <name type="synonym">Candida guilliermondii</name>
    <dbReference type="NCBI Taxonomy" id="294746"/>
    <lineage>
        <taxon>Eukaryota</taxon>
        <taxon>Fungi</taxon>
        <taxon>Dikarya</taxon>
        <taxon>Ascomycota</taxon>
        <taxon>Saccharomycotina</taxon>
        <taxon>Pichiomycetes</taxon>
        <taxon>Debaryomycetaceae</taxon>
        <taxon>Meyerozyma</taxon>
    </lineage>
</organism>
<gene>
    <name type="primary">NAR1</name>
    <name type="ORF">PGUG_03721</name>
</gene>
<dbReference type="EMBL" id="CH408158">
    <property type="protein sequence ID" value="EDK39623.2"/>
    <property type="molecule type" value="Genomic_DNA"/>
</dbReference>
<dbReference type="RefSeq" id="XP_001484340.1">
    <property type="nucleotide sequence ID" value="XM_001484290.1"/>
</dbReference>
<dbReference type="SMR" id="A5DKC0"/>
<dbReference type="FunCoup" id="A5DKC0">
    <property type="interactions" value="380"/>
</dbReference>
<dbReference type="STRING" id="294746.A5DKC0"/>
<dbReference type="GeneID" id="5126176"/>
<dbReference type="KEGG" id="pgu:PGUG_03721"/>
<dbReference type="VEuPathDB" id="FungiDB:PGUG_03721"/>
<dbReference type="eggNOG" id="KOG2439">
    <property type="taxonomic scope" value="Eukaryota"/>
</dbReference>
<dbReference type="HOGENOM" id="CLU_018240_0_1_1"/>
<dbReference type="InParanoid" id="A5DKC0"/>
<dbReference type="OMA" id="GYLHHVL"/>
<dbReference type="OrthoDB" id="10253113at2759"/>
<dbReference type="Proteomes" id="UP000001997">
    <property type="component" value="Unassembled WGS sequence"/>
</dbReference>
<dbReference type="GO" id="GO:0005829">
    <property type="term" value="C:cytosol"/>
    <property type="evidence" value="ECO:0007669"/>
    <property type="project" value="EnsemblFungi"/>
</dbReference>
<dbReference type="GO" id="GO:0016020">
    <property type="term" value="C:membrane"/>
    <property type="evidence" value="ECO:0007669"/>
    <property type="project" value="EnsemblFungi"/>
</dbReference>
<dbReference type="GO" id="GO:0051539">
    <property type="term" value="F:4 iron, 4 sulfur cluster binding"/>
    <property type="evidence" value="ECO:0007669"/>
    <property type="project" value="UniProtKB-KW"/>
</dbReference>
<dbReference type="GO" id="GO:0051536">
    <property type="term" value="F:iron-sulfur cluster binding"/>
    <property type="evidence" value="ECO:0000250"/>
    <property type="project" value="UniProtKB"/>
</dbReference>
<dbReference type="GO" id="GO:0046872">
    <property type="term" value="F:metal ion binding"/>
    <property type="evidence" value="ECO:0007669"/>
    <property type="project" value="UniProtKB-KW"/>
</dbReference>
<dbReference type="GO" id="GO:0016226">
    <property type="term" value="P:iron-sulfur cluster assembly"/>
    <property type="evidence" value="ECO:0000250"/>
    <property type="project" value="UniProtKB"/>
</dbReference>
<dbReference type="FunFam" id="3.40.50.1780:FF:000020">
    <property type="entry name" value="Cytosolic Fe-S cluster assembly factor NAR1"/>
    <property type="match status" value="1"/>
</dbReference>
<dbReference type="Gene3D" id="3.40.50.1780">
    <property type="match status" value="2"/>
</dbReference>
<dbReference type="Gene3D" id="3.40.950.10">
    <property type="entry name" value="Fe-only Hydrogenase (Larger Subunit), Chain L, domain 3"/>
    <property type="match status" value="2"/>
</dbReference>
<dbReference type="InterPro" id="IPR050340">
    <property type="entry name" value="Cytosolic_Fe-S_CAF"/>
</dbReference>
<dbReference type="InterPro" id="IPR009016">
    <property type="entry name" value="Fe_hydrogenase"/>
</dbReference>
<dbReference type="InterPro" id="IPR004108">
    <property type="entry name" value="Fe_hydrogenase_lsu_C"/>
</dbReference>
<dbReference type="PANTHER" id="PTHR11615">
    <property type="entry name" value="NITRATE, FORMATE, IRON DEHYDROGENASE"/>
    <property type="match status" value="1"/>
</dbReference>
<dbReference type="Pfam" id="PF02906">
    <property type="entry name" value="Fe_hyd_lg_C"/>
    <property type="match status" value="1"/>
</dbReference>
<dbReference type="SUPFAM" id="SSF53920">
    <property type="entry name" value="Fe-only hydrogenase"/>
    <property type="match status" value="1"/>
</dbReference>
<feature type="chain" id="PRO_0000383736" description="Cytosolic Fe-S cluster assembly factor NAR1">
    <location>
        <begin position="1"/>
        <end position="531"/>
    </location>
</feature>
<feature type="region of interest" description="Disordered" evidence="3">
    <location>
        <begin position="395"/>
        <end position="426"/>
    </location>
</feature>
<feature type="binding site" evidence="2">
    <location>
        <position position="20"/>
    </location>
    <ligand>
        <name>[4Fe-4S] cluster</name>
        <dbReference type="ChEBI" id="CHEBI:49883"/>
        <label>1</label>
    </ligand>
</feature>
<feature type="binding site" evidence="2">
    <location>
        <position position="72"/>
    </location>
    <ligand>
        <name>[4Fe-4S] cluster</name>
        <dbReference type="ChEBI" id="CHEBI:49883"/>
        <label>1</label>
    </ligand>
</feature>
<feature type="binding site" evidence="2">
    <location>
        <position position="75"/>
    </location>
    <ligand>
        <name>[4Fe-4S] cluster</name>
        <dbReference type="ChEBI" id="CHEBI:49883"/>
        <label>1</label>
    </ligand>
</feature>
<feature type="binding site" evidence="2">
    <location>
        <position position="78"/>
    </location>
    <ligand>
        <name>[4Fe-4S] cluster</name>
        <dbReference type="ChEBI" id="CHEBI:49883"/>
        <label>1</label>
    </ligand>
</feature>
<feature type="binding site" evidence="2">
    <location>
        <position position="184"/>
    </location>
    <ligand>
        <name>[4Fe-4S] cluster</name>
        <dbReference type="ChEBI" id="CHEBI:49883"/>
        <label>2</label>
    </ligand>
</feature>
<feature type="binding site" evidence="2">
    <location>
        <position position="239"/>
    </location>
    <ligand>
        <name>[4Fe-4S] cluster</name>
        <dbReference type="ChEBI" id="CHEBI:49883"/>
        <label>2</label>
    </ligand>
</feature>
<feature type="binding site" evidence="2">
    <location>
        <position position="442"/>
    </location>
    <ligand>
        <name>[4Fe-4S] cluster</name>
        <dbReference type="ChEBI" id="CHEBI:49883"/>
        <label>2</label>
    </ligand>
</feature>
<feature type="binding site" evidence="2">
    <location>
        <position position="446"/>
    </location>
    <ligand>
        <name>[4Fe-4S] cluster</name>
        <dbReference type="ChEBI" id="CHEBI:49883"/>
        <label>2</label>
    </ligand>
</feature>
<sequence length="531" mass="58791">MSALLSADDLNDFISPGIACIKPTVTENRSQEASEYGEVEIQIDENGKPLEISKIDGATKNLSPAQISLADCLACSGCITSAEEILVAQHSHNELIKALKEKKTNNKIFVASISHQARASLATAYYMKVSDIDRLLVDLLVNQMGFTYVVGTGLGRKLSLINESQSVIERKEHGFQGPILSSICPGWVLYAEKTHPHVLSRISDTKSPQQITGCLLKSLTAHQLEVERDQIYHLSIMPCFDKKLESARPEQDPSLVSNDVDCVLTPKELVTLLDECKDKFSLTFDALSHSSGSLTDLYQSCAPANWPYVELSWSSDSGSSSGGYGYNYLQLLQSHLCLRDPQQYQPQNFRLESVAGRNKDIYELRLVYNDNQVASSAIVNGFRNIQNLVRKLKPTSSTTTTKTNPLVARRKARLSSKRSESGAQDVQQADASKCDYVEIMACPNGCINGGGQINSPTDEDQKLWVSKTLTRYGSIPMVDLSSDSSLTLELMAWCREFCINYNVPESRLLKTWFHEVEQPTDQAAILVGSKW</sequence>